<gene>
    <name evidence="1" type="primary">rpl16</name>
</gene>
<proteinExistence type="inferred from homology"/>
<feature type="chain" id="PRO_0000354631" description="Large ribosomal subunit protein uL16c">
    <location>
        <begin position="1"/>
        <end position="138"/>
    </location>
</feature>
<feature type="region of interest" description="Disordered" evidence="2">
    <location>
        <begin position="1"/>
        <end position="21"/>
    </location>
</feature>
<feature type="compositionally biased region" description="Basic residues" evidence="2">
    <location>
        <begin position="7"/>
        <end position="21"/>
    </location>
</feature>
<reference key="1">
    <citation type="journal article" date="2007" name="Mol. Biol. Evol.">
        <title>Chloroplast genome (cpDNA) of Cycas taitungensis and 56 cp protein-coding genes of Gnetum parvifolium: insights into cpDNA evolution and phylogeny of extant seed plants.</title>
        <authorList>
            <person name="Wu C.-S."/>
            <person name="Wang Y.-N."/>
            <person name="Liu S.-M."/>
            <person name="Chaw S.-M."/>
        </authorList>
    </citation>
    <scope>NUCLEOTIDE SEQUENCE [LARGE SCALE GENOMIC DNA]</scope>
</reference>
<dbReference type="EMBL" id="AP009339">
    <property type="protein sequence ID" value="BAF64985.1"/>
    <property type="molecule type" value="Genomic_DNA"/>
</dbReference>
<dbReference type="RefSeq" id="YP_001312244.1">
    <property type="nucleotide sequence ID" value="NC_009618.1"/>
</dbReference>
<dbReference type="SMR" id="A6H5L9"/>
<dbReference type="GeneID" id="5309596"/>
<dbReference type="GO" id="GO:0009507">
    <property type="term" value="C:chloroplast"/>
    <property type="evidence" value="ECO:0007669"/>
    <property type="project" value="UniProtKB-SubCell"/>
</dbReference>
<dbReference type="GO" id="GO:0005762">
    <property type="term" value="C:mitochondrial large ribosomal subunit"/>
    <property type="evidence" value="ECO:0007669"/>
    <property type="project" value="TreeGrafter"/>
</dbReference>
<dbReference type="GO" id="GO:0019843">
    <property type="term" value="F:rRNA binding"/>
    <property type="evidence" value="ECO:0007669"/>
    <property type="project" value="InterPro"/>
</dbReference>
<dbReference type="GO" id="GO:0003735">
    <property type="term" value="F:structural constituent of ribosome"/>
    <property type="evidence" value="ECO:0007669"/>
    <property type="project" value="InterPro"/>
</dbReference>
<dbReference type="GO" id="GO:0032543">
    <property type="term" value="P:mitochondrial translation"/>
    <property type="evidence" value="ECO:0007669"/>
    <property type="project" value="TreeGrafter"/>
</dbReference>
<dbReference type="CDD" id="cd01433">
    <property type="entry name" value="Ribosomal_L16_L10e"/>
    <property type="match status" value="1"/>
</dbReference>
<dbReference type="FunFam" id="3.90.1170.10:FF:000001">
    <property type="entry name" value="50S ribosomal protein L16"/>
    <property type="match status" value="1"/>
</dbReference>
<dbReference type="Gene3D" id="3.90.1170.10">
    <property type="entry name" value="Ribosomal protein L10e/L16"/>
    <property type="match status" value="1"/>
</dbReference>
<dbReference type="HAMAP" id="MF_01342">
    <property type="entry name" value="Ribosomal_uL16"/>
    <property type="match status" value="1"/>
</dbReference>
<dbReference type="InterPro" id="IPR047873">
    <property type="entry name" value="Ribosomal_uL16"/>
</dbReference>
<dbReference type="InterPro" id="IPR000114">
    <property type="entry name" value="Ribosomal_uL16_bact-type"/>
</dbReference>
<dbReference type="InterPro" id="IPR020798">
    <property type="entry name" value="Ribosomal_uL16_CS"/>
</dbReference>
<dbReference type="InterPro" id="IPR016180">
    <property type="entry name" value="Ribosomal_uL16_dom"/>
</dbReference>
<dbReference type="InterPro" id="IPR036920">
    <property type="entry name" value="Ribosomal_uL16_sf"/>
</dbReference>
<dbReference type="NCBIfam" id="TIGR01164">
    <property type="entry name" value="rplP_bact"/>
    <property type="match status" value="1"/>
</dbReference>
<dbReference type="PANTHER" id="PTHR12220">
    <property type="entry name" value="50S/60S RIBOSOMAL PROTEIN L16"/>
    <property type="match status" value="1"/>
</dbReference>
<dbReference type="PANTHER" id="PTHR12220:SF13">
    <property type="entry name" value="LARGE RIBOSOMAL SUBUNIT PROTEIN UL16M"/>
    <property type="match status" value="1"/>
</dbReference>
<dbReference type="Pfam" id="PF00252">
    <property type="entry name" value="Ribosomal_L16"/>
    <property type="match status" value="1"/>
</dbReference>
<dbReference type="PRINTS" id="PR00060">
    <property type="entry name" value="RIBOSOMALL16"/>
</dbReference>
<dbReference type="SUPFAM" id="SSF54686">
    <property type="entry name" value="Ribosomal protein L16p/L10e"/>
    <property type="match status" value="1"/>
</dbReference>
<dbReference type="PROSITE" id="PS00586">
    <property type="entry name" value="RIBOSOMAL_L16_1"/>
    <property type="match status" value="1"/>
</dbReference>
<dbReference type="PROSITE" id="PS00701">
    <property type="entry name" value="RIBOSOMAL_L16_2"/>
    <property type="match status" value="1"/>
</dbReference>
<organism>
    <name type="scientific">Cycas taitungensis</name>
    <name type="common">Prince sago</name>
    <name type="synonym">Cycas taiwaniana</name>
    <dbReference type="NCBI Taxonomy" id="54799"/>
    <lineage>
        <taxon>Eukaryota</taxon>
        <taxon>Viridiplantae</taxon>
        <taxon>Streptophyta</taxon>
        <taxon>Embryophyta</taxon>
        <taxon>Tracheophyta</taxon>
        <taxon>Spermatophyta</taxon>
        <taxon>Cycadidae</taxon>
        <taxon>Cycadales</taxon>
        <taxon>Cycadaceae</taxon>
        <taxon>Cycas</taxon>
    </lineage>
</organism>
<keyword id="KW-0150">Chloroplast</keyword>
<keyword id="KW-0934">Plastid</keyword>
<keyword id="KW-0687">Ribonucleoprotein</keyword>
<keyword id="KW-0689">Ribosomal protein</keyword>
<protein>
    <recommendedName>
        <fullName evidence="1">Large ribosomal subunit protein uL16c</fullName>
    </recommendedName>
    <alternativeName>
        <fullName evidence="3">50S ribosomal protein L16, chloroplastic</fullName>
    </alternativeName>
</protein>
<name>RK16_CYCTA</name>
<geneLocation type="chloroplast"/>
<comment type="subunit">
    <text evidence="1">Part of the 50S ribosomal subunit.</text>
</comment>
<comment type="subcellular location">
    <subcellularLocation>
        <location>Plastid</location>
        <location>Chloroplast</location>
    </subcellularLocation>
</comment>
<comment type="similarity">
    <text evidence="1">Belongs to the universal ribosomal protein uL16 family.</text>
</comment>
<accession>A6H5L9</accession>
<evidence type="ECO:0000255" key="1">
    <source>
        <dbReference type="HAMAP-Rule" id="MF_01342"/>
    </source>
</evidence>
<evidence type="ECO:0000256" key="2">
    <source>
        <dbReference type="SAM" id="MobiDB-lite"/>
    </source>
</evidence>
<evidence type="ECO:0000305" key="3"/>
<sequence length="138" mass="15705">MLSPQKTKFRKQHRGRMKGVSHRRGNHICFGRFALQALEPAWITSGQIEAGRRAITRYARRGGKIWVRIFPDKPITMRPAETRMGSGKGSPEYWVSVIRPYRILYEMGGVSETVARAATEIAAYKMPIRTRFVTASPV</sequence>